<sequence>MDWDLITERNIQLFIQLAGLAERPLATNMFWRQGQYETYLNYHNGRIHLCQILKQTFLDEELLFKALANWKPAAFQGIPQRLFLLRDGLAMSCSPPLSSSAELWLRLHHRQIKFLESQCVHG</sequence>
<dbReference type="EMBL" id="Y09357">
    <property type="protein sequence ID" value="CAA70535.1"/>
    <property type="status" value="ALT_FRAME"/>
    <property type="molecule type" value="Genomic_DNA"/>
</dbReference>
<dbReference type="EMBL" id="AE006468">
    <property type="protein sequence ID" value="AAL20337.1"/>
    <property type="molecule type" value="Genomic_DNA"/>
</dbReference>
<dbReference type="RefSeq" id="NP_460378.1">
    <property type="nucleotide sequence ID" value="NC_003197.2"/>
</dbReference>
<dbReference type="RefSeq" id="WP_000383702.1">
    <property type="nucleotide sequence ID" value="NC_003197.2"/>
</dbReference>
<dbReference type="SMR" id="P74855"/>
<dbReference type="STRING" id="99287.STM1413"/>
<dbReference type="PaxDb" id="99287-STM1413"/>
<dbReference type="GeneID" id="1252931"/>
<dbReference type="KEGG" id="stm:STM1413"/>
<dbReference type="PATRIC" id="fig|99287.12.peg.1497"/>
<dbReference type="HOGENOM" id="CLU_164784_0_0_6"/>
<dbReference type="OMA" id="HRRYHLE"/>
<dbReference type="BioCyc" id="SENT99287:STM1413-MONOMER"/>
<dbReference type="PHI-base" id="PHI:2627"/>
<dbReference type="Proteomes" id="UP000001014">
    <property type="component" value="Chromosome"/>
</dbReference>
<dbReference type="GO" id="GO:0015031">
    <property type="term" value="P:protein transport"/>
    <property type="evidence" value="ECO:0007669"/>
    <property type="project" value="UniProtKB-KW"/>
</dbReference>
<dbReference type="InterPro" id="IPR017033">
    <property type="entry name" value="T3SS_SsaM"/>
</dbReference>
<dbReference type="NCBIfam" id="NF011880">
    <property type="entry name" value="PRK15353.1"/>
    <property type="match status" value="1"/>
</dbReference>
<dbReference type="PIRSF" id="PIRSF034789">
    <property type="entry name" value="T3SS_SsaM"/>
    <property type="match status" value="1"/>
</dbReference>
<organism>
    <name type="scientific">Salmonella typhimurium (strain LT2 / SGSC1412 / ATCC 700720)</name>
    <dbReference type="NCBI Taxonomy" id="99287"/>
    <lineage>
        <taxon>Bacteria</taxon>
        <taxon>Pseudomonadati</taxon>
        <taxon>Pseudomonadota</taxon>
        <taxon>Gammaproteobacteria</taxon>
        <taxon>Enterobacterales</taxon>
        <taxon>Enterobacteriaceae</taxon>
        <taxon>Salmonella</taxon>
    </lineage>
</organism>
<proteinExistence type="evidence at transcript level"/>
<protein>
    <recommendedName>
        <fullName>Secretion system apparatus protein SsaM</fullName>
    </recommendedName>
</protein>
<feature type="chain" id="PRO_0000072205" description="Secretion system apparatus protein SsaM">
    <location>
        <begin position="1"/>
        <end position="122"/>
    </location>
</feature>
<feature type="sequence conflict" description="In Ref. 1." evidence="4" ref="1">
    <location>
        <begin position="39"/>
        <end position="40"/>
    </location>
</feature>
<feature type="sequence conflict" description="In Ref. 1." evidence="4" ref="1">
    <original>H</original>
    <variation>L</variation>
    <location>
        <position position="48"/>
    </location>
</feature>
<accession>P74855</accession>
<name>SSAM_SALTY</name>
<reference key="1">
    <citation type="journal article" date="1997" name="Mol. Microbiol.">
        <title>Functional analysis of ssaJ and the ssaK/U operon, 13 genes encoding components of the type III secretion apparatus of Salmonella pathogenicity island 2.</title>
        <authorList>
            <person name="Hensel M."/>
            <person name="Shea J.E."/>
            <person name="Raupach B."/>
            <person name="Monack D."/>
            <person name="Falkow S."/>
            <person name="Gleeson C."/>
            <person name="Kubo T."/>
            <person name="Holden D.W."/>
        </authorList>
    </citation>
    <scope>NUCLEOTIDE SEQUENCE [GENOMIC DNA]</scope>
    <source>
        <strain>LT2</strain>
    </source>
</reference>
<reference key="2">
    <citation type="journal article" date="2001" name="Nature">
        <title>Complete genome sequence of Salmonella enterica serovar Typhimurium LT2.</title>
        <authorList>
            <person name="McClelland M."/>
            <person name="Sanderson K.E."/>
            <person name="Spieth J."/>
            <person name="Clifton S.W."/>
            <person name="Latreille P."/>
            <person name="Courtney L."/>
            <person name="Porwollik S."/>
            <person name="Ali J."/>
            <person name="Dante M."/>
            <person name="Du F."/>
            <person name="Hou S."/>
            <person name="Layman D."/>
            <person name="Leonard S."/>
            <person name="Nguyen C."/>
            <person name="Scott K."/>
            <person name="Holmes A."/>
            <person name="Grewal N."/>
            <person name="Mulvaney E."/>
            <person name="Ryan E."/>
            <person name="Sun H."/>
            <person name="Florea L."/>
            <person name="Miller W."/>
            <person name="Stoneking T."/>
            <person name="Nhan M."/>
            <person name="Waterston R."/>
            <person name="Wilson R.K."/>
        </authorList>
    </citation>
    <scope>NUCLEOTIDE SEQUENCE [LARGE SCALE GENOMIC DNA]</scope>
    <source>
        <strain>LT2 / SGSC1412 / ATCC 700720</strain>
    </source>
</reference>
<reference key="3">
    <citation type="journal article" date="2007" name="Mol. Microbiol.">
        <title>The response regulator SsrB activates expression of diverse Salmonella pathogenicity island 2 promoters and counters silencing by the nucleoid-associated protein H-NS.</title>
        <authorList>
            <person name="Walthers D."/>
            <person name="Carroll R.K."/>
            <person name="Navarre W.W."/>
            <person name="Libby S.J."/>
            <person name="Fang F.C."/>
            <person name="Kenney L.J."/>
        </authorList>
    </citation>
    <scope>INDUCTION</scope>
    <source>
        <strain evidence="3">14028s / SGSC 2262</strain>
    </source>
</reference>
<reference key="4">
    <citation type="journal article" date="2020" name="Cell Chem. Biol.">
        <title>Targeting Two-Component Systems Uncovers a Small-Molecule Inhibitor of Salmonella Virulence.</title>
        <authorList>
            <person name="Tsai C.N."/>
            <person name="MacNair C.R."/>
            <person name="Cao M.P.T."/>
            <person name="Perry J.N."/>
            <person name="Magolan J."/>
            <person name="Brown E.D."/>
            <person name="Coombes B.K."/>
        </authorList>
    </citation>
    <scope>INDUCTION</scope>
</reference>
<evidence type="ECO:0000269" key="1">
    <source>
    </source>
</evidence>
<evidence type="ECO:0000269" key="2">
    <source>
    </source>
</evidence>
<evidence type="ECO:0000303" key="3">
    <source>
    </source>
</evidence>
<evidence type="ECO:0000305" key="4"/>
<keyword id="KW-0653">Protein transport</keyword>
<keyword id="KW-1185">Reference proteome</keyword>
<keyword id="KW-0813">Transport</keyword>
<gene>
    <name type="primary">ssaM</name>
    <name type="ordered locus">STM1413</name>
</gene>
<comment type="induction">
    <text evidence="1 2">Induced when grown in an acidic environment (PubMed:17630976). Repressed by methyl-3,4-dephostatin (PubMed:32413287).</text>
</comment>
<comment type="sequence caution" evidence="4">
    <conflict type="frameshift">
        <sequence resource="EMBL-CDS" id="CAA70535"/>
    </conflict>
</comment>